<evidence type="ECO:0000250" key="1">
    <source>
        <dbReference type="UniProtKB" id="A0A1L4BJ42"/>
    </source>
</evidence>
<evidence type="ECO:0000250" key="2">
    <source>
        <dbReference type="UniProtKB" id="P59868"/>
    </source>
</evidence>
<evidence type="ECO:0000250" key="3">
    <source>
        <dbReference type="UniProtKB" id="P60254"/>
    </source>
</evidence>
<evidence type="ECO:0000255" key="4"/>
<evidence type="ECO:0000269" key="5">
    <source>
    </source>
</evidence>
<evidence type="ECO:0000269" key="6">
    <source>
    </source>
</evidence>
<evidence type="ECO:0000269" key="7">
    <source ref="2"/>
</evidence>
<evidence type="ECO:0000303" key="8">
    <source>
    </source>
</evidence>
<evidence type="ECO:0000303" key="9">
    <source ref="2"/>
</evidence>
<evidence type="ECO:0000305" key="10">
    <source>
    </source>
</evidence>
<accession>B8QG00</accession>
<accession>P85499</accession>
<name>CAHAD_HOFGE</name>
<proteinExistence type="evidence at protein level"/>
<protein>
    <recommendedName>
        <fullName evidence="9">Hadrucalcin</fullName>
        <shortName evidence="8 9">HdCa</shortName>
    </recommendedName>
</protein>
<sequence length="74" mass="8593">MKTSSLTIIFIAVIITIICLNIHDIEAREIEFNAGRVVRSEKDCIKHLQRCRENKDCCSKKCSRRGTNPEKRCR</sequence>
<organism>
    <name type="scientific">Hoffmannihadrurus gertschi</name>
    <name type="common">Scorpion</name>
    <name type="synonym">Hadrurus gertschi</name>
    <dbReference type="NCBI Taxonomy" id="380989"/>
    <lineage>
        <taxon>Eukaryota</taxon>
        <taxon>Metazoa</taxon>
        <taxon>Ecdysozoa</taxon>
        <taxon>Arthropoda</taxon>
        <taxon>Chelicerata</taxon>
        <taxon>Arachnida</taxon>
        <taxon>Scorpiones</taxon>
        <taxon>Iurida</taxon>
        <taxon>Iuroidea</taxon>
        <taxon>Hadrurus</taxon>
    </lineage>
</organism>
<reference key="1">
    <citation type="journal article" date="2009" name="Br. J. Pharmacol.">
        <title>Characterization of hadrucalcin, a peptide from Hadrurus gertschi scorpion venom with pharmacological activity on ryanodine receptors.</title>
        <authorList>
            <person name="Schwartz E.F."/>
            <person name="Capes E.M."/>
            <person name="Diego-Garcia E."/>
            <person name="Zamudio F.Z."/>
            <person name="Fuentes O."/>
            <person name="Possani L.D."/>
            <person name="Valdivia H.H."/>
        </authorList>
    </citation>
    <scope>NUCLEOTIDE SEQUENCE [MRNA]</scope>
    <scope>PROTEIN SEQUENCE OF 40-74</scope>
    <scope>FUNCTION ON RYR1 AND RYR2</scope>
    <scope>SUBCELLULAR LOCATION</scope>
    <scope>MASS SPECTROMETRY</scope>
    <source>
        <tissue>Telson</tissue>
        <tissue>Venom</tissue>
    </source>
</reference>
<reference key="2">
    <citation type="journal article" date="2008" name="Biophys. J.">
        <title>Hadrucalcin, a novel member of the Calcin scorpion toxin family, rapidly penetrates cellular membranes to bind ryanodine receptors and alter calcium release.</title>
        <authorList>
            <person name="Capes E.M."/>
            <person name="Schwartz E.F."/>
            <person name="Diego-Garcia E."/>
            <person name="Zamudio F.Z."/>
            <person name="Possani L.D."/>
            <person name="Valdivia H.H."/>
        </authorList>
    </citation>
    <scope>FUNCTION</scope>
</reference>
<reference key="3">
    <citation type="journal article" date="2016" name="J. Gen. Physiol.">
        <title>Structure-function relationships of peptides forming the calcin family of ryanodine receptor ligands.</title>
        <authorList>
            <person name="Xiao L."/>
            <person name="Gurrola G.B."/>
            <person name="Zhang J."/>
            <person name="Valdivia C.R."/>
            <person name="SanMartin M."/>
            <person name="Zamudio F.Z."/>
            <person name="Zhang L."/>
            <person name="Possani L.D."/>
            <person name="Valdivia H.H."/>
        </authorList>
    </citation>
    <scope>FUNCTION</scope>
    <scope>SYNTHESIS OF 40-74</scope>
    <scope>3D-STRUCTURE MODELING</scope>
</reference>
<feature type="signal peptide" evidence="4">
    <location>
        <begin position="1"/>
        <end position="27"/>
    </location>
</feature>
<feature type="propeptide" id="PRO_0000383671" evidence="4 5">
    <location>
        <begin position="28"/>
        <end position="39"/>
    </location>
</feature>
<feature type="peptide" id="PRO_5000433512" description="Hadrucalcin" evidence="5">
    <location>
        <begin position="40"/>
        <end position="74"/>
    </location>
</feature>
<feature type="region of interest" description="Essential for stimulation of [3H]ryanodine binding to RYR1" evidence="2 3">
    <location>
        <begin position="64"/>
        <end position="65"/>
    </location>
</feature>
<feature type="site" description="Essential for stimulation of [3H]ryanodine binding to RYR1" evidence="2">
    <location>
        <position position="72"/>
    </location>
</feature>
<feature type="site" description="Essential for stimulation of [3H]ryanodine binding to RYR1" evidence="2">
    <location>
        <position position="74"/>
    </location>
</feature>
<feature type="disulfide bond" evidence="2">
    <location>
        <begin position="44"/>
        <end position="58"/>
    </location>
</feature>
<feature type="disulfide bond" evidence="2">
    <location>
        <begin position="51"/>
        <end position="62"/>
    </location>
</feature>
<feature type="disulfide bond" evidence="2">
    <location>
        <begin position="57"/>
        <end position="73"/>
    </location>
</feature>
<dbReference type="EMBL" id="EU496812">
    <property type="protein sequence ID" value="ACC99422.1"/>
    <property type="molecule type" value="mRNA"/>
</dbReference>
<dbReference type="SMR" id="B8QG00"/>
<dbReference type="TCDB" id="8.B.16.1.3">
    <property type="family name" value="the maurocalcine (maca) family"/>
</dbReference>
<dbReference type="GO" id="GO:0005576">
    <property type="term" value="C:extracellular region"/>
    <property type="evidence" value="ECO:0007669"/>
    <property type="project" value="UniProtKB-SubCell"/>
</dbReference>
<dbReference type="GO" id="GO:0019855">
    <property type="term" value="F:calcium channel inhibitor activity"/>
    <property type="evidence" value="ECO:0007669"/>
    <property type="project" value="InterPro"/>
</dbReference>
<dbReference type="GO" id="GO:0090729">
    <property type="term" value="F:toxin activity"/>
    <property type="evidence" value="ECO:0007669"/>
    <property type="project" value="UniProtKB-KW"/>
</dbReference>
<dbReference type="InterPro" id="IPR012632">
    <property type="entry name" value="Scorpion_calcine"/>
</dbReference>
<dbReference type="Pfam" id="PF08099">
    <property type="entry name" value="Toxin_27"/>
    <property type="match status" value="1"/>
</dbReference>
<dbReference type="SUPFAM" id="SSF57059">
    <property type="entry name" value="omega toxin-like"/>
    <property type="match status" value="1"/>
</dbReference>
<dbReference type="PROSITE" id="PS60028">
    <property type="entry name" value="SCORPION_CALCINE"/>
    <property type="match status" value="1"/>
</dbReference>
<keyword id="KW-0108">Calcium channel impairing toxin</keyword>
<keyword id="KW-0903">Direct protein sequencing</keyword>
<keyword id="KW-1015">Disulfide bond</keyword>
<keyword id="KW-0872">Ion channel impairing toxin</keyword>
<keyword id="KW-0960">Knottin</keyword>
<keyword id="KW-0528">Neurotoxin</keyword>
<keyword id="KW-1219">Ryanodine-sensitive calcium-release channel impairing toxin</keyword>
<keyword id="KW-0964">Secreted</keyword>
<keyword id="KW-0732">Signal</keyword>
<keyword id="KW-0800">Toxin</keyword>
<comment type="function">
    <text evidence="1 2 3 5 6 7">This toxin activates ryanodine receptors RyR1 and RyR2 by inducing a long-lasting subconductance state (35% of the full conductance stateon RyR1) (PubMed:19389159, PubMed:27114612). Furthermore, it triggers calcium release from sarcoplasmic vesicles (11.8 nM are enough to induce a sharp release on RyR1, and 55% of the total calcium is released after toxin (100 nM) addition on RyR1) probably by acting as a cell-penetrating peptide (CPP) (PubMed:19389159). In addition, it has been shown to dose-dependently stimulate ryanodine binding to RyR1 (EC(50)=14.8 nM) (PubMed:27114612). It also augments the bell-shaped calcium-[3H]ryanodine binding curve that is maximal at about 10 uM calcium concentration (PubMed:27114612). It binds a different site as ryanodine (By similarity). It acts synergistically with caffeine (PubMed:19389159). In vivo, intracerebroventricular injection into mice induces neurotoxic symptoms, followed by death (By similarity).</text>
</comment>
<comment type="subcellular location">
    <subcellularLocation>
        <location evidence="5">Secreted</location>
    </subcellularLocation>
</comment>
<comment type="tissue specificity">
    <text evidence="10">Expressed by the venom gland.</text>
</comment>
<comment type="domain">
    <text evidence="2">The presence of a 'disulfide through disulfide knot' structurally defines this protein as a knottin.</text>
</comment>
<comment type="mass spectrometry" mass="4190.5" method="Electrospray" evidence="5"/>
<comment type="similarity">
    <text evidence="4">Belongs to the scorpion calcin family.</text>
</comment>